<name>EF1A_ONCVO</name>
<organism>
    <name type="scientific">Onchocerca volvulus</name>
    <dbReference type="NCBI Taxonomy" id="6282"/>
    <lineage>
        <taxon>Eukaryota</taxon>
        <taxon>Metazoa</taxon>
        <taxon>Ecdysozoa</taxon>
        <taxon>Nematoda</taxon>
        <taxon>Chromadorea</taxon>
        <taxon>Rhabditida</taxon>
        <taxon>Spirurina</taxon>
        <taxon>Spiruromorpha</taxon>
        <taxon>Filarioidea</taxon>
        <taxon>Onchocercidae</taxon>
        <taxon>Onchocerca</taxon>
    </lineage>
</organism>
<keyword id="KW-0963">Cytoplasm</keyword>
<keyword id="KW-0251">Elongation factor</keyword>
<keyword id="KW-0342">GTP-binding</keyword>
<keyword id="KW-0547">Nucleotide-binding</keyword>
<keyword id="KW-0597">Phosphoprotein</keyword>
<keyword id="KW-0648">Protein biosynthesis</keyword>
<keyword id="KW-1185">Reference proteome</keyword>
<sequence length="464" mass="50724">MGKEKTHINIVVIGHVDSGKSTTTGHLIYKCGGIDKRTIEKFEKEAQEMGKGSFKYAWVLDKLKAERERGIQIDIALWKFETPKYYITIIDAPGHRDFIKNMITGTSQADCAVLVVACGTGEFEAGISKNGQTREHALLAQTLGVKQMIVACNKMDSTDPPFSEARFGEVTTEVSNYIKKIGYNPKSIPFVPISGFNGDNMLEPSANMPWFKGWSVERKEGTMTGKTLLEALDSVVPPQRPTDKPLRLPLQDVYKIGGIGTVPVGRVETGILKPGMIVTFAPQNLTTEVKSVEMHHEALQEALPGDNVGFNVKNISIKDIRRGSVASDSKNDPAKETKMFTAQVIIMNHPGQISAGYTPVLDCHTAHIACKFAELKEKVDRRSGKKVEDNPKSLKSGDAGIIDLIPTKPLCVETFTEYPPLGRFAVRDMRQTVAVGVIKNVDKSEGVGKVQKAAQKAGVGGKKK</sequence>
<proteinExistence type="evidence at transcript level"/>
<protein>
    <recommendedName>
        <fullName>Elongation factor 1-alpha</fullName>
        <shortName>EF-1-alpha</shortName>
    </recommendedName>
</protein>
<feature type="chain" id="PRO_0000090927" description="Elongation factor 1-alpha">
    <location>
        <begin position="1"/>
        <end position="464"/>
    </location>
</feature>
<feature type="domain" description="tr-type G">
    <location>
        <begin position="5"/>
        <end position="242"/>
    </location>
</feature>
<feature type="binding site" evidence="1">
    <location>
        <begin position="14"/>
        <end position="21"/>
    </location>
    <ligand>
        <name>GTP</name>
        <dbReference type="ChEBI" id="CHEBI:37565"/>
    </ligand>
</feature>
<feature type="binding site" evidence="1">
    <location>
        <begin position="91"/>
        <end position="95"/>
    </location>
    <ligand>
        <name>GTP</name>
        <dbReference type="ChEBI" id="CHEBI:37565"/>
    </ligand>
</feature>
<feature type="binding site" evidence="1">
    <location>
        <begin position="153"/>
        <end position="156"/>
    </location>
    <ligand>
        <name>GTP</name>
        <dbReference type="ChEBI" id="CHEBI:37565"/>
    </ligand>
</feature>
<feature type="modified residue" description="5-glutamyl glycerylphosphorylethanolamine" evidence="1">
    <location>
        <position position="301"/>
    </location>
</feature>
<feature type="modified residue" description="5-glutamyl glycerylphosphorylethanolamine" evidence="1">
    <location>
        <position position="374"/>
    </location>
</feature>
<comment type="function">
    <text>This protein promotes the GTP-dependent binding of aminoacyl-tRNA to the A-site of ribosomes during protein biosynthesis.</text>
</comment>
<comment type="subcellular location">
    <subcellularLocation>
        <location>Cytoplasm</location>
    </subcellularLocation>
</comment>
<comment type="similarity">
    <text evidence="2">Belongs to the TRAFAC class translation factor GTPase superfamily. Classic translation factor GTPase family. EF-Tu/EF-1A subfamily.</text>
</comment>
<accession>P27592</accession>
<reference key="1">
    <citation type="journal article" date="1991" name="Mol. Biochem. Parasitol.">
        <title>Translational elongation factor 1 alpha (EF-1 alpha) of Onchocerca volvulus.</title>
        <authorList>
            <person name="Alarcon C.M."/>
            <person name="Donelson J.E."/>
        </authorList>
    </citation>
    <scope>NUCLEOTIDE SEQUENCE [MRNA]</scope>
</reference>
<evidence type="ECO:0000250" key="1"/>
<evidence type="ECO:0000305" key="2"/>
<dbReference type="EMBL" id="M64333">
    <property type="protein sequence ID" value="AAA29416.1"/>
    <property type="molecule type" value="mRNA"/>
</dbReference>
<dbReference type="PIR" id="A45618">
    <property type="entry name" value="A45618"/>
</dbReference>
<dbReference type="SMR" id="P27592"/>
<dbReference type="STRING" id="6282.P27592"/>
<dbReference type="HOGENOM" id="CLU_007265_3_5_1"/>
<dbReference type="Proteomes" id="UP000024404">
    <property type="component" value="Unassembled WGS sequence"/>
</dbReference>
<dbReference type="GO" id="GO:0005737">
    <property type="term" value="C:cytoplasm"/>
    <property type="evidence" value="ECO:0007669"/>
    <property type="project" value="UniProtKB-SubCell"/>
</dbReference>
<dbReference type="GO" id="GO:0005525">
    <property type="term" value="F:GTP binding"/>
    <property type="evidence" value="ECO:0007669"/>
    <property type="project" value="UniProtKB-KW"/>
</dbReference>
<dbReference type="GO" id="GO:0003924">
    <property type="term" value="F:GTPase activity"/>
    <property type="evidence" value="ECO:0007669"/>
    <property type="project" value="InterPro"/>
</dbReference>
<dbReference type="GO" id="GO:0003746">
    <property type="term" value="F:translation elongation factor activity"/>
    <property type="evidence" value="ECO:0007669"/>
    <property type="project" value="UniProtKB-KW"/>
</dbReference>
<dbReference type="CDD" id="cd01883">
    <property type="entry name" value="EF1_alpha"/>
    <property type="match status" value="1"/>
</dbReference>
<dbReference type="CDD" id="cd03693">
    <property type="entry name" value="EF1_alpha_II"/>
    <property type="match status" value="1"/>
</dbReference>
<dbReference type="CDD" id="cd03705">
    <property type="entry name" value="EF1_alpha_III"/>
    <property type="match status" value="1"/>
</dbReference>
<dbReference type="FunFam" id="2.40.30.10:FF:000003">
    <property type="entry name" value="Elongation factor 1-alpha"/>
    <property type="match status" value="1"/>
</dbReference>
<dbReference type="FunFam" id="2.40.30.10:FF:000005">
    <property type="entry name" value="Elongation factor 1-alpha"/>
    <property type="match status" value="1"/>
</dbReference>
<dbReference type="FunFam" id="3.40.50.300:FF:000090">
    <property type="entry name" value="Elongation factor 1-alpha"/>
    <property type="match status" value="1"/>
</dbReference>
<dbReference type="Gene3D" id="3.40.50.300">
    <property type="entry name" value="P-loop containing nucleotide triphosphate hydrolases"/>
    <property type="match status" value="1"/>
</dbReference>
<dbReference type="Gene3D" id="2.40.30.10">
    <property type="entry name" value="Translation factors"/>
    <property type="match status" value="2"/>
</dbReference>
<dbReference type="HAMAP" id="MF_00118_A">
    <property type="entry name" value="EF_Tu_A"/>
    <property type="match status" value="1"/>
</dbReference>
<dbReference type="InterPro" id="IPR004161">
    <property type="entry name" value="EFTu-like_2"/>
</dbReference>
<dbReference type="InterPro" id="IPR054696">
    <property type="entry name" value="GTP-eEF1A_C"/>
</dbReference>
<dbReference type="InterPro" id="IPR027417">
    <property type="entry name" value="P-loop_NTPase"/>
</dbReference>
<dbReference type="InterPro" id="IPR000795">
    <property type="entry name" value="T_Tr_GTP-bd_dom"/>
</dbReference>
<dbReference type="InterPro" id="IPR050100">
    <property type="entry name" value="TRAFAC_GTPase_members"/>
</dbReference>
<dbReference type="InterPro" id="IPR009000">
    <property type="entry name" value="Transl_B-barrel_sf"/>
</dbReference>
<dbReference type="InterPro" id="IPR009001">
    <property type="entry name" value="Transl_elong_EF1A/Init_IF2_C"/>
</dbReference>
<dbReference type="InterPro" id="IPR004539">
    <property type="entry name" value="Transl_elong_EF1A_euk/arc"/>
</dbReference>
<dbReference type="NCBIfam" id="TIGR00483">
    <property type="entry name" value="EF-1_alpha"/>
    <property type="match status" value="1"/>
</dbReference>
<dbReference type="NCBIfam" id="NF008969">
    <property type="entry name" value="PRK12317.1"/>
    <property type="match status" value="1"/>
</dbReference>
<dbReference type="PANTHER" id="PTHR23115">
    <property type="entry name" value="TRANSLATION FACTOR"/>
    <property type="match status" value="1"/>
</dbReference>
<dbReference type="Pfam" id="PF22594">
    <property type="entry name" value="GTP-eEF1A_C"/>
    <property type="match status" value="1"/>
</dbReference>
<dbReference type="Pfam" id="PF00009">
    <property type="entry name" value="GTP_EFTU"/>
    <property type="match status" value="1"/>
</dbReference>
<dbReference type="Pfam" id="PF03144">
    <property type="entry name" value="GTP_EFTU_D2"/>
    <property type="match status" value="1"/>
</dbReference>
<dbReference type="PRINTS" id="PR00315">
    <property type="entry name" value="ELONGATNFCT"/>
</dbReference>
<dbReference type="SUPFAM" id="SSF50465">
    <property type="entry name" value="EF-Tu/eEF-1alpha/eIF2-gamma C-terminal domain"/>
    <property type="match status" value="1"/>
</dbReference>
<dbReference type="SUPFAM" id="SSF52540">
    <property type="entry name" value="P-loop containing nucleoside triphosphate hydrolases"/>
    <property type="match status" value="1"/>
</dbReference>
<dbReference type="SUPFAM" id="SSF50447">
    <property type="entry name" value="Translation proteins"/>
    <property type="match status" value="1"/>
</dbReference>
<dbReference type="PROSITE" id="PS51722">
    <property type="entry name" value="G_TR_2"/>
    <property type="match status" value="1"/>
</dbReference>